<comment type="function">
    <text evidence="1">Single strand-specific metallo-endoribonuclease involved in late-stage 70S ribosome quality control and in maturation of the 3' terminus of the 16S rRNA.</text>
</comment>
<comment type="cofactor">
    <cofactor evidence="1">
        <name>Zn(2+)</name>
        <dbReference type="ChEBI" id="CHEBI:29105"/>
    </cofactor>
    <text evidence="1">Binds 1 zinc ion.</text>
</comment>
<comment type="subcellular location">
    <subcellularLocation>
        <location evidence="1">Cytoplasm</location>
    </subcellularLocation>
</comment>
<comment type="similarity">
    <text evidence="1">Belongs to the endoribonuclease YbeY family.</text>
</comment>
<name>YBEY_MYCGI</name>
<keyword id="KW-0963">Cytoplasm</keyword>
<keyword id="KW-0255">Endonuclease</keyword>
<keyword id="KW-0378">Hydrolase</keyword>
<keyword id="KW-0479">Metal-binding</keyword>
<keyword id="KW-0540">Nuclease</keyword>
<keyword id="KW-0690">Ribosome biogenesis</keyword>
<keyword id="KW-0698">rRNA processing</keyword>
<keyword id="KW-0862">Zinc</keyword>
<sequence length="178" mass="19888">MSIEVSNESGIDVSESELVSVARFVIRKMDVNPAAELSMVLLDTAAMADLHMRWMDLPGPTDVMSFPMDELEPGGRPDTPEPGPSMLGDIVLCPEFAAKQAADAGHTLGQELALLTVHGVLHLLGYDHAEPDEEKEMFALQRELLEEWVAEQVEAYHLDRQNEKDRRLLDKSRYFDTP</sequence>
<gene>
    <name evidence="1" type="primary">ybeY</name>
    <name type="ordered locus">Mflv_2707</name>
</gene>
<dbReference type="EC" id="3.1.-.-" evidence="1"/>
<dbReference type="EMBL" id="CP000656">
    <property type="protein sequence ID" value="ABP45184.1"/>
    <property type="molecule type" value="Genomic_DNA"/>
</dbReference>
<dbReference type="SMR" id="A4T2C0"/>
<dbReference type="STRING" id="350054.Mflv_2707"/>
<dbReference type="KEGG" id="mgi:Mflv_2707"/>
<dbReference type="eggNOG" id="COG0319">
    <property type="taxonomic scope" value="Bacteria"/>
</dbReference>
<dbReference type="HOGENOM" id="CLU_106710_3_2_11"/>
<dbReference type="OrthoDB" id="9807740at2"/>
<dbReference type="GO" id="GO:0005737">
    <property type="term" value="C:cytoplasm"/>
    <property type="evidence" value="ECO:0007669"/>
    <property type="project" value="UniProtKB-SubCell"/>
</dbReference>
<dbReference type="GO" id="GO:0004222">
    <property type="term" value="F:metalloendopeptidase activity"/>
    <property type="evidence" value="ECO:0007669"/>
    <property type="project" value="InterPro"/>
</dbReference>
<dbReference type="GO" id="GO:0004521">
    <property type="term" value="F:RNA endonuclease activity"/>
    <property type="evidence" value="ECO:0007669"/>
    <property type="project" value="UniProtKB-UniRule"/>
</dbReference>
<dbReference type="GO" id="GO:0008270">
    <property type="term" value="F:zinc ion binding"/>
    <property type="evidence" value="ECO:0007669"/>
    <property type="project" value="UniProtKB-UniRule"/>
</dbReference>
<dbReference type="GO" id="GO:0006364">
    <property type="term" value="P:rRNA processing"/>
    <property type="evidence" value="ECO:0007669"/>
    <property type="project" value="UniProtKB-UniRule"/>
</dbReference>
<dbReference type="Gene3D" id="3.40.390.30">
    <property type="entry name" value="Metalloproteases ('zincins'), catalytic domain"/>
    <property type="match status" value="1"/>
</dbReference>
<dbReference type="HAMAP" id="MF_00009">
    <property type="entry name" value="Endoribonucl_YbeY"/>
    <property type="match status" value="1"/>
</dbReference>
<dbReference type="InterPro" id="IPR023091">
    <property type="entry name" value="MetalPrtase_cat_dom_sf_prd"/>
</dbReference>
<dbReference type="InterPro" id="IPR002036">
    <property type="entry name" value="YbeY"/>
</dbReference>
<dbReference type="InterPro" id="IPR020549">
    <property type="entry name" value="YbeY_CS"/>
</dbReference>
<dbReference type="NCBIfam" id="TIGR00043">
    <property type="entry name" value="rRNA maturation RNase YbeY"/>
    <property type="match status" value="1"/>
</dbReference>
<dbReference type="PANTHER" id="PTHR46986">
    <property type="entry name" value="ENDORIBONUCLEASE YBEY, CHLOROPLASTIC"/>
    <property type="match status" value="1"/>
</dbReference>
<dbReference type="PANTHER" id="PTHR46986:SF1">
    <property type="entry name" value="ENDORIBONUCLEASE YBEY, CHLOROPLASTIC"/>
    <property type="match status" value="1"/>
</dbReference>
<dbReference type="Pfam" id="PF02130">
    <property type="entry name" value="YbeY"/>
    <property type="match status" value="1"/>
</dbReference>
<dbReference type="SUPFAM" id="SSF55486">
    <property type="entry name" value="Metalloproteases ('zincins'), catalytic domain"/>
    <property type="match status" value="1"/>
</dbReference>
<dbReference type="PROSITE" id="PS01306">
    <property type="entry name" value="UPF0054"/>
    <property type="match status" value="1"/>
</dbReference>
<reference key="1">
    <citation type="submission" date="2007-04" db="EMBL/GenBank/DDBJ databases">
        <title>Complete sequence of chromosome of Mycobacterium gilvum PYR-GCK.</title>
        <authorList>
            <consortium name="US DOE Joint Genome Institute"/>
            <person name="Copeland A."/>
            <person name="Lucas S."/>
            <person name="Lapidus A."/>
            <person name="Barry K."/>
            <person name="Detter J.C."/>
            <person name="Glavina del Rio T."/>
            <person name="Hammon N."/>
            <person name="Israni S."/>
            <person name="Dalin E."/>
            <person name="Tice H."/>
            <person name="Pitluck S."/>
            <person name="Chain P."/>
            <person name="Malfatti S."/>
            <person name="Shin M."/>
            <person name="Vergez L."/>
            <person name="Schmutz J."/>
            <person name="Larimer F."/>
            <person name="Land M."/>
            <person name="Hauser L."/>
            <person name="Kyrpides N."/>
            <person name="Mikhailova N."/>
            <person name="Miller C."/>
            <person name="Richardson P."/>
        </authorList>
    </citation>
    <scope>NUCLEOTIDE SEQUENCE [LARGE SCALE GENOMIC DNA]</scope>
    <source>
        <strain>PYR-GCK</strain>
    </source>
</reference>
<accession>A4T2C0</accession>
<protein>
    <recommendedName>
        <fullName evidence="1">Endoribonuclease YbeY</fullName>
        <ecNumber evidence="1">3.1.-.-</ecNumber>
    </recommendedName>
</protein>
<feature type="chain" id="PRO_1000073909" description="Endoribonuclease YbeY">
    <location>
        <begin position="1"/>
        <end position="178"/>
    </location>
</feature>
<feature type="binding site" evidence="1">
    <location>
        <position position="118"/>
    </location>
    <ligand>
        <name>Zn(2+)</name>
        <dbReference type="ChEBI" id="CHEBI:29105"/>
        <note>catalytic</note>
    </ligand>
</feature>
<feature type="binding site" evidence="1">
    <location>
        <position position="122"/>
    </location>
    <ligand>
        <name>Zn(2+)</name>
        <dbReference type="ChEBI" id="CHEBI:29105"/>
        <note>catalytic</note>
    </ligand>
</feature>
<feature type="binding site" evidence="1">
    <location>
        <position position="128"/>
    </location>
    <ligand>
        <name>Zn(2+)</name>
        <dbReference type="ChEBI" id="CHEBI:29105"/>
        <note>catalytic</note>
    </ligand>
</feature>
<evidence type="ECO:0000255" key="1">
    <source>
        <dbReference type="HAMAP-Rule" id="MF_00009"/>
    </source>
</evidence>
<organism>
    <name type="scientific">Mycolicibacterium gilvum (strain PYR-GCK)</name>
    <name type="common">Mycobacterium gilvum (strain PYR-GCK)</name>
    <dbReference type="NCBI Taxonomy" id="350054"/>
    <lineage>
        <taxon>Bacteria</taxon>
        <taxon>Bacillati</taxon>
        <taxon>Actinomycetota</taxon>
        <taxon>Actinomycetes</taxon>
        <taxon>Mycobacteriales</taxon>
        <taxon>Mycobacteriaceae</taxon>
        <taxon>Mycolicibacterium</taxon>
    </lineage>
</organism>
<proteinExistence type="inferred from homology"/>